<evidence type="ECO:0000255" key="1">
    <source>
        <dbReference type="HAMAP-Rule" id="MF_00791"/>
    </source>
</evidence>
<organism>
    <name type="scientific">Pseudomonas fluorescens (strain Pf0-1)</name>
    <dbReference type="NCBI Taxonomy" id="205922"/>
    <lineage>
        <taxon>Bacteria</taxon>
        <taxon>Pseudomonadati</taxon>
        <taxon>Pseudomonadota</taxon>
        <taxon>Gammaproteobacteria</taxon>
        <taxon>Pseudomonadales</taxon>
        <taxon>Pseudomonadaceae</taxon>
        <taxon>Pseudomonas</taxon>
    </lineage>
</organism>
<accession>Q3K5T1</accession>
<feature type="chain" id="PRO_1000083637" description="Protein ApaG">
    <location>
        <begin position="1"/>
        <end position="126"/>
    </location>
</feature>
<feature type="domain" description="ApaG" evidence="1">
    <location>
        <begin position="2"/>
        <end position="126"/>
    </location>
</feature>
<protein>
    <recommendedName>
        <fullName evidence="1">Protein ApaG</fullName>
    </recommendedName>
</protein>
<name>APAG_PSEPF</name>
<dbReference type="EMBL" id="CP000094">
    <property type="protein sequence ID" value="ABA76873.1"/>
    <property type="molecule type" value="Genomic_DNA"/>
</dbReference>
<dbReference type="RefSeq" id="WP_011336209.1">
    <property type="nucleotide sequence ID" value="NC_007492.2"/>
</dbReference>
<dbReference type="SMR" id="Q3K5T1"/>
<dbReference type="KEGG" id="pfo:Pfl01_5136"/>
<dbReference type="eggNOG" id="COG2967">
    <property type="taxonomic scope" value="Bacteria"/>
</dbReference>
<dbReference type="HOGENOM" id="CLU_128074_0_0_6"/>
<dbReference type="Proteomes" id="UP000002704">
    <property type="component" value="Chromosome"/>
</dbReference>
<dbReference type="GO" id="GO:0070987">
    <property type="term" value="P:error-free translesion synthesis"/>
    <property type="evidence" value="ECO:0007669"/>
    <property type="project" value="TreeGrafter"/>
</dbReference>
<dbReference type="Gene3D" id="2.60.40.1470">
    <property type="entry name" value="ApaG domain"/>
    <property type="match status" value="1"/>
</dbReference>
<dbReference type="HAMAP" id="MF_00791">
    <property type="entry name" value="ApaG"/>
    <property type="match status" value="1"/>
</dbReference>
<dbReference type="InterPro" id="IPR007474">
    <property type="entry name" value="ApaG_domain"/>
</dbReference>
<dbReference type="InterPro" id="IPR036767">
    <property type="entry name" value="ApaG_sf"/>
</dbReference>
<dbReference type="InterPro" id="IPR023065">
    <property type="entry name" value="Uncharacterised_ApaG"/>
</dbReference>
<dbReference type="NCBIfam" id="NF003967">
    <property type="entry name" value="PRK05461.1"/>
    <property type="match status" value="1"/>
</dbReference>
<dbReference type="PANTHER" id="PTHR14289">
    <property type="entry name" value="F-BOX ONLY PROTEIN 3"/>
    <property type="match status" value="1"/>
</dbReference>
<dbReference type="PANTHER" id="PTHR14289:SF16">
    <property type="entry name" value="POLYMERASE DELTA-INTERACTING PROTEIN 2"/>
    <property type="match status" value="1"/>
</dbReference>
<dbReference type="Pfam" id="PF04379">
    <property type="entry name" value="DUF525"/>
    <property type="match status" value="1"/>
</dbReference>
<dbReference type="SUPFAM" id="SSF110069">
    <property type="entry name" value="ApaG-like"/>
    <property type="match status" value="1"/>
</dbReference>
<dbReference type="PROSITE" id="PS51087">
    <property type="entry name" value="APAG"/>
    <property type="match status" value="1"/>
</dbReference>
<sequence length="126" mass="13784">MSDPRYQVDVSVVTHYLADQSQPEHERFAFAYTITVQNNGEQPARLMSRHWVITDGDGHVEEVRGAGVVGQQPLIGAGKSHTYSSGTVMTTKVGTMQGSYEMVADDGKHFDAIIKPFRLAVPGALH</sequence>
<gene>
    <name evidence="1" type="primary">apaG</name>
    <name type="ordered locus">Pfl01_5136</name>
</gene>
<reference key="1">
    <citation type="journal article" date="2009" name="Genome Biol.">
        <title>Genomic and genetic analyses of diversity and plant interactions of Pseudomonas fluorescens.</title>
        <authorList>
            <person name="Silby M.W."/>
            <person name="Cerdeno-Tarraga A.M."/>
            <person name="Vernikos G.S."/>
            <person name="Giddens S.R."/>
            <person name="Jackson R.W."/>
            <person name="Preston G.M."/>
            <person name="Zhang X.-X."/>
            <person name="Moon C.D."/>
            <person name="Gehrig S.M."/>
            <person name="Godfrey S.A.C."/>
            <person name="Knight C.G."/>
            <person name="Malone J.G."/>
            <person name="Robinson Z."/>
            <person name="Spiers A.J."/>
            <person name="Harris S."/>
            <person name="Challis G.L."/>
            <person name="Yaxley A.M."/>
            <person name="Harris D."/>
            <person name="Seeger K."/>
            <person name="Murphy L."/>
            <person name="Rutter S."/>
            <person name="Squares R."/>
            <person name="Quail M.A."/>
            <person name="Saunders E."/>
            <person name="Mavromatis K."/>
            <person name="Brettin T.S."/>
            <person name="Bentley S.D."/>
            <person name="Hothersall J."/>
            <person name="Stephens E."/>
            <person name="Thomas C.M."/>
            <person name="Parkhill J."/>
            <person name="Levy S.B."/>
            <person name="Rainey P.B."/>
            <person name="Thomson N.R."/>
        </authorList>
    </citation>
    <scope>NUCLEOTIDE SEQUENCE [LARGE SCALE GENOMIC DNA]</scope>
    <source>
        <strain>Pf0-1</strain>
    </source>
</reference>
<proteinExistence type="inferred from homology"/>